<feature type="chain" id="PRO_0000242164" description="Zinc finger protein 414">
    <location>
        <begin position="1"/>
        <end position="299"/>
    </location>
</feature>
<feature type="zinc finger region" description="C2H2-type 1" evidence="1">
    <location>
        <begin position="99"/>
        <end position="123"/>
    </location>
</feature>
<feature type="zinc finger region" description="C2H2-type 2" evidence="1">
    <location>
        <begin position="135"/>
        <end position="159"/>
    </location>
</feature>
<feature type="zinc finger region" description="C2H2-type 3; degenerate" evidence="1">
    <location>
        <begin position="166"/>
        <end position="190"/>
    </location>
</feature>
<feature type="region of interest" description="Disordered" evidence="2">
    <location>
        <begin position="1"/>
        <end position="98"/>
    </location>
</feature>
<feature type="region of interest" description="Disordered" evidence="2">
    <location>
        <begin position="193"/>
        <end position="228"/>
    </location>
</feature>
<feature type="region of interest" description="Disordered" evidence="2">
    <location>
        <begin position="254"/>
        <end position="299"/>
    </location>
</feature>
<feature type="compositionally biased region" description="Polar residues" evidence="2">
    <location>
        <begin position="1"/>
        <end position="20"/>
    </location>
</feature>
<feature type="compositionally biased region" description="Polar residues" evidence="2">
    <location>
        <begin position="69"/>
        <end position="81"/>
    </location>
</feature>
<feature type="compositionally biased region" description="Basic and acidic residues" evidence="2">
    <location>
        <begin position="203"/>
        <end position="215"/>
    </location>
</feature>
<feature type="compositionally biased region" description="Low complexity" evidence="2">
    <location>
        <begin position="217"/>
        <end position="228"/>
    </location>
</feature>
<feature type="splice variant" id="VSP_019454" description="In isoform 2." evidence="3 4">
    <location>
        <begin position="1"/>
        <end position="49"/>
    </location>
</feature>
<evidence type="ECO:0000255" key="1">
    <source>
        <dbReference type="PROSITE-ProRule" id="PRU00042"/>
    </source>
</evidence>
<evidence type="ECO:0000256" key="2">
    <source>
        <dbReference type="SAM" id="MobiDB-lite"/>
    </source>
</evidence>
<evidence type="ECO:0000303" key="3">
    <source>
    </source>
</evidence>
<evidence type="ECO:0000303" key="4">
    <source>
    </source>
</evidence>
<evidence type="ECO:0000305" key="5"/>
<reference key="1">
    <citation type="journal article" date="2005" name="Science">
        <title>The transcriptional landscape of the mammalian genome.</title>
        <authorList>
            <person name="Carninci P."/>
            <person name="Kasukawa T."/>
            <person name="Katayama S."/>
            <person name="Gough J."/>
            <person name="Frith M.C."/>
            <person name="Maeda N."/>
            <person name="Oyama R."/>
            <person name="Ravasi T."/>
            <person name="Lenhard B."/>
            <person name="Wells C."/>
            <person name="Kodzius R."/>
            <person name="Shimokawa K."/>
            <person name="Bajic V.B."/>
            <person name="Brenner S.E."/>
            <person name="Batalov S."/>
            <person name="Forrest A.R."/>
            <person name="Zavolan M."/>
            <person name="Davis M.J."/>
            <person name="Wilming L.G."/>
            <person name="Aidinis V."/>
            <person name="Allen J.E."/>
            <person name="Ambesi-Impiombato A."/>
            <person name="Apweiler R."/>
            <person name="Aturaliya R.N."/>
            <person name="Bailey T.L."/>
            <person name="Bansal M."/>
            <person name="Baxter L."/>
            <person name="Beisel K.W."/>
            <person name="Bersano T."/>
            <person name="Bono H."/>
            <person name="Chalk A.M."/>
            <person name="Chiu K.P."/>
            <person name="Choudhary V."/>
            <person name="Christoffels A."/>
            <person name="Clutterbuck D.R."/>
            <person name="Crowe M.L."/>
            <person name="Dalla E."/>
            <person name="Dalrymple B.P."/>
            <person name="de Bono B."/>
            <person name="Della Gatta G."/>
            <person name="di Bernardo D."/>
            <person name="Down T."/>
            <person name="Engstrom P."/>
            <person name="Fagiolini M."/>
            <person name="Faulkner G."/>
            <person name="Fletcher C.F."/>
            <person name="Fukushima T."/>
            <person name="Furuno M."/>
            <person name="Futaki S."/>
            <person name="Gariboldi M."/>
            <person name="Georgii-Hemming P."/>
            <person name="Gingeras T.R."/>
            <person name="Gojobori T."/>
            <person name="Green R.E."/>
            <person name="Gustincich S."/>
            <person name="Harbers M."/>
            <person name="Hayashi Y."/>
            <person name="Hensch T.K."/>
            <person name="Hirokawa N."/>
            <person name="Hill D."/>
            <person name="Huminiecki L."/>
            <person name="Iacono M."/>
            <person name="Ikeo K."/>
            <person name="Iwama A."/>
            <person name="Ishikawa T."/>
            <person name="Jakt M."/>
            <person name="Kanapin A."/>
            <person name="Katoh M."/>
            <person name="Kawasawa Y."/>
            <person name="Kelso J."/>
            <person name="Kitamura H."/>
            <person name="Kitano H."/>
            <person name="Kollias G."/>
            <person name="Krishnan S.P."/>
            <person name="Kruger A."/>
            <person name="Kummerfeld S.K."/>
            <person name="Kurochkin I.V."/>
            <person name="Lareau L.F."/>
            <person name="Lazarevic D."/>
            <person name="Lipovich L."/>
            <person name="Liu J."/>
            <person name="Liuni S."/>
            <person name="McWilliam S."/>
            <person name="Madan Babu M."/>
            <person name="Madera M."/>
            <person name="Marchionni L."/>
            <person name="Matsuda H."/>
            <person name="Matsuzawa S."/>
            <person name="Miki H."/>
            <person name="Mignone F."/>
            <person name="Miyake S."/>
            <person name="Morris K."/>
            <person name="Mottagui-Tabar S."/>
            <person name="Mulder N."/>
            <person name="Nakano N."/>
            <person name="Nakauchi H."/>
            <person name="Ng P."/>
            <person name="Nilsson R."/>
            <person name="Nishiguchi S."/>
            <person name="Nishikawa S."/>
            <person name="Nori F."/>
            <person name="Ohara O."/>
            <person name="Okazaki Y."/>
            <person name="Orlando V."/>
            <person name="Pang K.C."/>
            <person name="Pavan W.J."/>
            <person name="Pavesi G."/>
            <person name="Pesole G."/>
            <person name="Petrovsky N."/>
            <person name="Piazza S."/>
            <person name="Reed J."/>
            <person name="Reid J.F."/>
            <person name="Ring B.Z."/>
            <person name="Ringwald M."/>
            <person name="Rost B."/>
            <person name="Ruan Y."/>
            <person name="Salzberg S.L."/>
            <person name="Sandelin A."/>
            <person name="Schneider C."/>
            <person name="Schoenbach C."/>
            <person name="Sekiguchi K."/>
            <person name="Semple C.A."/>
            <person name="Seno S."/>
            <person name="Sessa L."/>
            <person name="Sheng Y."/>
            <person name="Shibata Y."/>
            <person name="Shimada H."/>
            <person name="Shimada K."/>
            <person name="Silva D."/>
            <person name="Sinclair B."/>
            <person name="Sperling S."/>
            <person name="Stupka E."/>
            <person name="Sugiura K."/>
            <person name="Sultana R."/>
            <person name="Takenaka Y."/>
            <person name="Taki K."/>
            <person name="Tammoja K."/>
            <person name="Tan S.L."/>
            <person name="Tang S."/>
            <person name="Taylor M.S."/>
            <person name="Tegner J."/>
            <person name="Teichmann S.A."/>
            <person name="Ueda H.R."/>
            <person name="van Nimwegen E."/>
            <person name="Verardo R."/>
            <person name="Wei C.L."/>
            <person name="Yagi K."/>
            <person name="Yamanishi H."/>
            <person name="Zabarovsky E."/>
            <person name="Zhu S."/>
            <person name="Zimmer A."/>
            <person name="Hide W."/>
            <person name="Bult C."/>
            <person name="Grimmond S.M."/>
            <person name="Teasdale R.D."/>
            <person name="Liu E.T."/>
            <person name="Brusic V."/>
            <person name="Quackenbush J."/>
            <person name="Wahlestedt C."/>
            <person name="Mattick J.S."/>
            <person name="Hume D.A."/>
            <person name="Kai C."/>
            <person name="Sasaki D."/>
            <person name="Tomaru Y."/>
            <person name="Fukuda S."/>
            <person name="Kanamori-Katayama M."/>
            <person name="Suzuki M."/>
            <person name="Aoki J."/>
            <person name="Arakawa T."/>
            <person name="Iida J."/>
            <person name="Imamura K."/>
            <person name="Itoh M."/>
            <person name="Kato T."/>
            <person name="Kawaji H."/>
            <person name="Kawagashira N."/>
            <person name="Kawashima T."/>
            <person name="Kojima M."/>
            <person name="Kondo S."/>
            <person name="Konno H."/>
            <person name="Nakano K."/>
            <person name="Ninomiya N."/>
            <person name="Nishio T."/>
            <person name="Okada M."/>
            <person name="Plessy C."/>
            <person name="Shibata K."/>
            <person name="Shiraki T."/>
            <person name="Suzuki S."/>
            <person name="Tagami M."/>
            <person name="Waki K."/>
            <person name="Watahiki A."/>
            <person name="Okamura-Oho Y."/>
            <person name="Suzuki H."/>
            <person name="Kawai J."/>
            <person name="Hayashizaki Y."/>
        </authorList>
    </citation>
    <scope>NUCLEOTIDE SEQUENCE [LARGE SCALE MRNA] (ISOFORMS 1 AND 2)</scope>
    <source>
        <strain>C57BL/6J</strain>
        <tissue>Dendritic cell</tissue>
        <tissue>Kidney</tissue>
    </source>
</reference>
<reference key="2">
    <citation type="journal article" date="2004" name="Mamm. Genome">
        <title>Gene content of the 750-kb critical region for mouse embryonic ectoderm lethal tcl-w5.</title>
        <authorList>
            <person name="Abe K."/>
            <person name="Yuzuriha M."/>
            <person name="Sugimoto M."/>
            <person name="Ko M.S."/>
            <person name="Brathwaite M.E."/>
            <person name="Waeltz P."/>
            <person name="Nagaraja R."/>
        </authorList>
    </citation>
    <scope>NUCLEOTIDE SEQUENCE [LARGE SCALE GENOMIC DNA]</scope>
    <source>
        <strain>129/Sv</strain>
    </source>
</reference>
<reference key="3">
    <citation type="journal article" date="2004" name="Genome Res.">
        <title>The status, quality, and expansion of the NIH full-length cDNA project: the Mammalian Gene Collection (MGC).</title>
        <authorList>
            <consortium name="The MGC Project Team"/>
        </authorList>
    </citation>
    <scope>NUCLEOTIDE SEQUENCE [LARGE SCALE MRNA] (ISOFORM 2)</scope>
    <source>
        <strain>FVB/N</strain>
        <tissue>Liver</tissue>
    </source>
</reference>
<name>ZN414_MOUSE</name>
<proteinExistence type="evidence at transcript level"/>
<comment type="function">
    <text>May be involved in transcriptional regulation.</text>
</comment>
<comment type="subcellular location">
    <subcellularLocation>
        <location evidence="5">Nucleus</location>
    </subcellularLocation>
</comment>
<comment type="alternative products">
    <event type="alternative splicing"/>
    <isoform>
        <id>Q9DCK4-1</id>
        <name>1</name>
        <sequence type="displayed"/>
    </isoform>
    <isoform>
        <id>Q9DCK4-2</id>
        <name>2</name>
        <sequence type="described" ref="VSP_019454"/>
    </isoform>
</comment>
<comment type="similarity">
    <text evidence="5">Belongs to the krueppel C2H2-type zinc-finger protein family.</text>
</comment>
<organism>
    <name type="scientific">Mus musculus</name>
    <name type="common">Mouse</name>
    <dbReference type="NCBI Taxonomy" id="10090"/>
    <lineage>
        <taxon>Eukaryota</taxon>
        <taxon>Metazoa</taxon>
        <taxon>Chordata</taxon>
        <taxon>Craniata</taxon>
        <taxon>Vertebrata</taxon>
        <taxon>Euteleostomi</taxon>
        <taxon>Mammalia</taxon>
        <taxon>Eutheria</taxon>
        <taxon>Euarchontoglires</taxon>
        <taxon>Glires</taxon>
        <taxon>Rodentia</taxon>
        <taxon>Myomorpha</taxon>
        <taxon>Muroidea</taxon>
        <taxon>Muridae</taxon>
        <taxon>Murinae</taxon>
        <taxon>Mus</taxon>
        <taxon>Mus</taxon>
    </lineage>
</organism>
<accession>Q9DCK4</accession>
<accession>Q8CHU9</accession>
<keyword id="KW-0025">Alternative splicing</keyword>
<keyword id="KW-0238">DNA-binding</keyword>
<keyword id="KW-0479">Metal-binding</keyword>
<keyword id="KW-0539">Nucleus</keyword>
<keyword id="KW-1185">Reference proteome</keyword>
<keyword id="KW-0677">Repeat</keyword>
<keyword id="KW-0804">Transcription</keyword>
<keyword id="KW-0805">Transcription regulation</keyword>
<keyword id="KW-0862">Zinc</keyword>
<keyword id="KW-0863">Zinc-finger</keyword>
<gene>
    <name type="primary">Znf414</name>
    <name type="synonym">Zfp414</name>
</gene>
<sequence length="299" mass="31988">MEEPSRPSSDTLTTVESSSGEPDKEVASPDGAAPATFSSVEEPSPNPTAMPPVWDHGGPLQQVAYPASDSCQTGSTNTGVGTNEDLRLPRRRPPPGKQIPCSSPGCCLSFPSVRDLAQHLRTHCPPTQSLEGKLFRCSALSCTESFPSMQELVAHGKLHYKPNRYFKCENCLLRFRTHRSLFKHLHVCIDHGQNPAPPPPPALDKEPPVPERPPESDPSSSLGLPFPLLEPFTSAPTGPFLPYLNPAPFGLSPPRLRPFLAATPGPPASSTAIWKKSQGATSSPRRPQGGSDAPSGACR</sequence>
<dbReference type="EMBL" id="AK002706">
    <property type="protein sequence ID" value="BAB22300.1"/>
    <property type="molecule type" value="mRNA"/>
</dbReference>
<dbReference type="EMBL" id="AK169869">
    <property type="protein sequence ID" value="BAE41424.1"/>
    <property type="molecule type" value="mRNA"/>
</dbReference>
<dbReference type="EMBL" id="AF528163">
    <property type="protein sequence ID" value="AAO17381.1"/>
    <property type="molecule type" value="Genomic_DNA"/>
</dbReference>
<dbReference type="EMBL" id="BC038913">
    <property type="protein sequence ID" value="AAH38913.1"/>
    <property type="molecule type" value="mRNA"/>
</dbReference>
<dbReference type="CCDS" id="CCDS37568.1">
    <molecule id="Q9DCK4-1"/>
</dbReference>
<dbReference type="RefSeq" id="NP_080988.1">
    <molecule id="Q9DCK4-1"/>
    <property type="nucleotide sequence ID" value="NM_026712.3"/>
</dbReference>
<dbReference type="FunCoup" id="Q9DCK4">
    <property type="interactions" value="757"/>
</dbReference>
<dbReference type="STRING" id="10090.ENSMUSP00000073259"/>
<dbReference type="PhosphoSitePlus" id="Q9DCK4"/>
<dbReference type="PaxDb" id="10090-ENSMUSP00000073259"/>
<dbReference type="ProteomicsDB" id="275011">
    <molecule id="Q9DCK4-1"/>
</dbReference>
<dbReference type="ProteomicsDB" id="275012">
    <molecule id="Q9DCK4-2"/>
</dbReference>
<dbReference type="Antibodypedia" id="24915">
    <property type="antibodies" value="45 antibodies from 15 providers"/>
</dbReference>
<dbReference type="Ensembl" id="ENSMUST00000073570.12">
    <molecule id="Q9DCK4-1"/>
    <property type="protein sequence ID" value="ENSMUSP00000073259.6"/>
    <property type="gene ID" value="ENSMUSG00000073423.11"/>
</dbReference>
<dbReference type="Ensembl" id="ENSMUST00000166627.8">
    <molecule id="Q9DCK4-2"/>
    <property type="protein sequence ID" value="ENSMUSP00000129423.2"/>
    <property type="gene ID" value="ENSMUSG00000073423.11"/>
</dbReference>
<dbReference type="GeneID" id="328801"/>
<dbReference type="KEGG" id="mmu:328801"/>
<dbReference type="UCSC" id="uc008byw.2">
    <molecule id="Q9DCK4-1"/>
    <property type="organism name" value="mouse"/>
</dbReference>
<dbReference type="AGR" id="MGI:1915641"/>
<dbReference type="CTD" id="328801"/>
<dbReference type="MGI" id="MGI:1915641">
    <property type="gene designation" value="Zfp414"/>
</dbReference>
<dbReference type="VEuPathDB" id="HostDB:ENSMUSG00000073423"/>
<dbReference type="eggNOG" id="KOG1721">
    <property type="taxonomic scope" value="Eukaryota"/>
</dbReference>
<dbReference type="GeneTree" id="ENSGT00390000006876"/>
<dbReference type="HOGENOM" id="CLU_049178_0_0_1"/>
<dbReference type="InParanoid" id="Q9DCK4"/>
<dbReference type="OMA" id="HIRDHEI"/>
<dbReference type="OrthoDB" id="8730587at2759"/>
<dbReference type="PhylomeDB" id="Q9DCK4"/>
<dbReference type="TreeFam" id="TF337512"/>
<dbReference type="BioGRID-ORCS" id="328801">
    <property type="hits" value="4 hits in 76 CRISPR screens"/>
</dbReference>
<dbReference type="ChiTaRS" id="Zfp414">
    <property type="organism name" value="mouse"/>
</dbReference>
<dbReference type="PRO" id="PR:Q9DCK4"/>
<dbReference type="Proteomes" id="UP000000589">
    <property type="component" value="Chromosome 17"/>
</dbReference>
<dbReference type="RNAct" id="Q9DCK4">
    <property type="molecule type" value="protein"/>
</dbReference>
<dbReference type="Bgee" id="ENSMUSG00000073423">
    <property type="expression patterns" value="Expressed in granulocyte and 223 other cell types or tissues"/>
</dbReference>
<dbReference type="ExpressionAtlas" id="Q9DCK4">
    <property type="expression patterns" value="baseline and differential"/>
</dbReference>
<dbReference type="GO" id="GO:0005634">
    <property type="term" value="C:nucleus"/>
    <property type="evidence" value="ECO:0007669"/>
    <property type="project" value="UniProtKB-SubCell"/>
</dbReference>
<dbReference type="GO" id="GO:0003677">
    <property type="term" value="F:DNA binding"/>
    <property type="evidence" value="ECO:0007669"/>
    <property type="project" value="UniProtKB-KW"/>
</dbReference>
<dbReference type="GO" id="GO:0008270">
    <property type="term" value="F:zinc ion binding"/>
    <property type="evidence" value="ECO:0007669"/>
    <property type="project" value="UniProtKB-KW"/>
</dbReference>
<dbReference type="Gene3D" id="3.30.160.60">
    <property type="entry name" value="Classic Zinc Finger"/>
    <property type="match status" value="1"/>
</dbReference>
<dbReference type="InterPro" id="IPR039882">
    <property type="entry name" value="ZN414"/>
</dbReference>
<dbReference type="InterPro" id="IPR031799">
    <property type="entry name" value="Znf-C2H2_ribbon"/>
</dbReference>
<dbReference type="InterPro" id="IPR013087">
    <property type="entry name" value="Znf_C2H2_type"/>
</dbReference>
<dbReference type="PANTHER" id="PTHR21695">
    <property type="entry name" value="ZINC FINGER PROTEIN 414"/>
    <property type="match status" value="1"/>
</dbReference>
<dbReference type="PANTHER" id="PTHR21695:SF0">
    <property type="entry name" value="ZINC FINGER PROTEIN 414"/>
    <property type="match status" value="1"/>
</dbReference>
<dbReference type="Pfam" id="PF15909">
    <property type="entry name" value="zf-C2H2_8"/>
    <property type="match status" value="1"/>
</dbReference>
<dbReference type="SMART" id="SM00355">
    <property type="entry name" value="ZnF_C2H2"/>
    <property type="match status" value="3"/>
</dbReference>
<dbReference type="PROSITE" id="PS00028">
    <property type="entry name" value="ZINC_FINGER_C2H2_1"/>
    <property type="match status" value="2"/>
</dbReference>
<dbReference type="PROSITE" id="PS50157">
    <property type="entry name" value="ZINC_FINGER_C2H2_2"/>
    <property type="match status" value="2"/>
</dbReference>
<protein>
    <recommendedName>
        <fullName>Zinc finger protein 414</fullName>
    </recommendedName>
</protein>